<proteinExistence type="evidence at protein level"/>
<keyword id="KW-0010">Activator</keyword>
<keyword id="KW-0961">Cell wall biogenesis/degradation</keyword>
<keyword id="KW-0217">Developmental protein</keyword>
<keyword id="KW-0238">DNA-binding</keyword>
<keyword id="KW-0539">Nucleus</keyword>
<keyword id="KW-0611">Plant defense</keyword>
<keyword id="KW-1185">Reference proteome</keyword>
<keyword id="KW-0804">Transcription</keyword>
<keyword id="KW-0805">Transcription regulation</keyword>
<organism evidence="25">
    <name type="scientific">Arabidopsis thaliana</name>
    <name type="common">Mouse-ear cress</name>
    <dbReference type="NCBI Taxonomy" id="3702"/>
    <lineage>
        <taxon>Eukaryota</taxon>
        <taxon>Viridiplantae</taxon>
        <taxon>Streptophyta</taxon>
        <taxon>Embryophyta</taxon>
        <taxon>Tracheophyta</taxon>
        <taxon>Spermatophyta</taxon>
        <taxon>Magnoliopsida</taxon>
        <taxon>eudicotyledons</taxon>
        <taxon>Gunneridae</taxon>
        <taxon>Pentapetalae</taxon>
        <taxon>rosids</taxon>
        <taxon>malvids</taxon>
        <taxon>Brassicales</taxon>
        <taxon>Brassicaceae</taxon>
        <taxon>Camelineae</taxon>
        <taxon>Arabidopsis</taxon>
    </lineage>
</organism>
<protein>
    <recommendedName>
        <fullName evidence="20">NAC domain-containing protein 30</fullName>
        <shortName evidence="20">ANAC030</shortName>
    </recommendedName>
    <alternativeName>
        <fullName evidence="21">Protein VASCULAR RELATED NAC-DOMAIN 7</fullName>
    </alternativeName>
</protein>
<gene>
    <name evidence="20" type="primary">NAC030</name>
    <name evidence="21" type="synonym">VND7</name>
    <name evidence="23" type="ordered locus">At1g71930</name>
    <name evidence="24" type="ORF">F17M19.8</name>
</gene>
<dbReference type="EMBL" id="AC021665">
    <property type="protein sequence ID" value="AAG52219.1"/>
    <property type="molecule type" value="Genomic_DNA"/>
</dbReference>
<dbReference type="EMBL" id="CP002684">
    <property type="protein sequence ID" value="AEE35254.1"/>
    <property type="molecule type" value="Genomic_DNA"/>
</dbReference>
<dbReference type="EMBL" id="CP002684">
    <property type="protein sequence ID" value="ANM61162.1"/>
    <property type="molecule type" value="Genomic_DNA"/>
</dbReference>
<dbReference type="EMBL" id="BT026447">
    <property type="protein sequence ID" value="ABH04554.1"/>
    <property type="molecule type" value="mRNA"/>
</dbReference>
<dbReference type="EMBL" id="AY085424">
    <property type="protein sequence ID" value="AAM62651.1"/>
    <property type="molecule type" value="mRNA"/>
</dbReference>
<dbReference type="PIR" id="B96742">
    <property type="entry name" value="B96742"/>
</dbReference>
<dbReference type="RefSeq" id="NP_001323397.1">
    <property type="nucleotide sequence ID" value="NM_001334512.1"/>
</dbReference>
<dbReference type="RefSeq" id="NP_177338.1">
    <property type="nucleotide sequence ID" value="NM_105851.2"/>
</dbReference>
<dbReference type="SMR" id="Q9C8W9"/>
<dbReference type="FunCoup" id="Q9C8W9">
    <property type="interactions" value="18"/>
</dbReference>
<dbReference type="IntAct" id="Q9C8W9">
    <property type="interactions" value="6"/>
</dbReference>
<dbReference type="STRING" id="3702.Q9C8W9"/>
<dbReference type="PaxDb" id="3702-AT1G71930.1"/>
<dbReference type="ProteomicsDB" id="251198"/>
<dbReference type="EnsemblPlants" id="AT1G71930.1">
    <property type="protein sequence ID" value="AT1G71930.1"/>
    <property type="gene ID" value="AT1G71930"/>
</dbReference>
<dbReference type="EnsemblPlants" id="AT1G71930.2">
    <property type="protein sequence ID" value="AT1G71930.2"/>
    <property type="gene ID" value="AT1G71930"/>
</dbReference>
<dbReference type="GeneID" id="843524"/>
<dbReference type="Gramene" id="AT1G71930.1">
    <property type="protein sequence ID" value="AT1G71930.1"/>
    <property type="gene ID" value="AT1G71930"/>
</dbReference>
<dbReference type="Gramene" id="AT1G71930.2">
    <property type="protein sequence ID" value="AT1G71930.2"/>
    <property type="gene ID" value="AT1G71930"/>
</dbReference>
<dbReference type="KEGG" id="ath:AT1G71930"/>
<dbReference type="Araport" id="AT1G71930"/>
<dbReference type="TAIR" id="AT1G71930">
    <property type="gene designation" value="VND7"/>
</dbReference>
<dbReference type="eggNOG" id="ENOG502QUJ2">
    <property type="taxonomic scope" value="Eukaryota"/>
</dbReference>
<dbReference type="HOGENOM" id="CLU_035664_1_2_1"/>
<dbReference type="InParanoid" id="Q9C8W9"/>
<dbReference type="OMA" id="YNDVEAN"/>
<dbReference type="OrthoDB" id="1922833at2759"/>
<dbReference type="PhylomeDB" id="Q9C8W9"/>
<dbReference type="PRO" id="PR:Q9C8W9"/>
<dbReference type="Proteomes" id="UP000006548">
    <property type="component" value="Chromosome 1"/>
</dbReference>
<dbReference type="ExpressionAtlas" id="Q9C8W9">
    <property type="expression patterns" value="baseline and differential"/>
</dbReference>
<dbReference type="GO" id="GO:0005634">
    <property type="term" value="C:nucleus"/>
    <property type="evidence" value="ECO:0000314"/>
    <property type="project" value="UniProtKB"/>
</dbReference>
<dbReference type="GO" id="GO:0003700">
    <property type="term" value="F:DNA-binding transcription factor activity"/>
    <property type="evidence" value="ECO:0000314"/>
    <property type="project" value="UniProtKB"/>
</dbReference>
<dbReference type="GO" id="GO:0042802">
    <property type="term" value="F:identical protein binding"/>
    <property type="evidence" value="ECO:0000353"/>
    <property type="project" value="UniProtKB"/>
</dbReference>
<dbReference type="GO" id="GO:0046982">
    <property type="term" value="F:protein heterodimerization activity"/>
    <property type="evidence" value="ECO:0000314"/>
    <property type="project" value="UniProtKB"/>
</dbReference>
<dbReference type="GO" id="GO:0042803">
    <property type="term" value="F:protein homodimerization activity"/>
    <property type="evidence" value="ECO:0000314"/>
    <property type="project" value="UniProtKB"/>
</dbReference>
<dbReference type="GO" id="GO:0043565">
    <property type="term" value="F:sequence-specific DNA binding"/>
    <property type="evidence" value="ECO:0000314"/>
    <property type="project" value="UniProtKB"/>
</dbReference>
<dbReference type="GO" id="GO:0000976">
    <property type="term" value="F:transcription cis-regulatory region binding"/>
    <property type="evidence" value="ECO:0000353"/>
    <property type="project" value="TAIR"/>
</dbReference>
<dbReference type="GO" id="GO:0071555">
    <property type="term" value="P:cell wall organization"/>
    <property type="evidence" value="ECO:0007669"/>
    <property type="project" value="UniProtKB-KW"/>
</dbReference>
<dbReference type="GO" id="GO:0071365">
    <property type="term" value="P:cellular response to auxin stimulus"/>
    <property type="evidence" value="ECO:0000314"/>
    <property type="project" value="UniProtKB"/>
</dbReference>
<dbReference type="GO" id="GO:0050832">
    <property type="term" value="P:defense response to fungus"/>
    <property type="evidence" value="ECO:0000315"/>
    <property type="project" value="UniProtKB"/>
</dbReference>
<dbReference type="GO" id="GO:0045893">
    <property type="term" value="P:positive regulation of DNA-templated transcription"/>
    <property type="evidence" value="ECO:0000314"/>
    <property type="project" value="TAIR"/>
</dbReference>
<dbReference type="GO" id="GO:0010628">
    <property type="term" value="P:positive regulation of gene expression"/>
    <property type="evidence" value="ECO:0000314"/>
    <property type="project" value="UniProtKB"/>
</dbReference>
<dbReference type="GO" id="GO:0090059">
    <property type="term" value="P:protoxylem development"/>
    <property type="evidence" value="ECO:0000315"/>
    <property type="project" value="UniProtKB"/>
</dbReference>
<dbReference type="GO" id="GO:0006355">
    <property type="term" value="P:regulation of DNA-templated transcription"/>
    <property type="evidence" value="ECO:0000304"/>
    <property type="project" value="TAIR"/>
</dbReference>
<dbReference type="GO" id="GO:0009737">
    <property type="term" value="P:response to abscisic acid"/>
    <property type="evidence" value="ECO:0000270"/>
    <property type="project" value="TAIR"/>
</dbReference>
<dbReference type="GO" id="GO:0009733">
    <property type="term" value="P:response to auxin"/>
    <property type="evidence" value="ECO:0000270"/>
    <property type="project" value="UniProtKB"/>
</dbReference>
<dbReference type="GO" id="GO:0009741">
    <property type="term" value="P:response to brassinosteroid"/>
    <property type="evidence" value="ECO:0000270"/>
    <property type="project" value="TAIR"/>
</dbReference>
<dbReference type="GO" id="GO:0009735">
    <property type="term" value="P:response to cytokinin"/>
    <property type="evidence" value="ECO:0000270"/>
    <property type="project" value="TAIR"/>
</dbReference>
<dbReference type="GO" id="GO:0009620">
    <property type="term" value="P:response to fungus"/>
    <property type="evidence" value="ECO:0000314"/>
    <property type="project" value="UniProtKB"/>
</dbReference>
<dbReference type="GO" id="GO:0045491">
    <property type="term" value="P:xylan metabolic process"/>
    <property type="evidence" value="ECO:0000315"/>
    <property type="project" value="UniProtKB"/>
</dbReference>
<dbReference type="GO" id="GO:0010089">
    <property type="term" value="P:xylem development"/>
    <property type="evidence" value="ECO:0000315"/>
    <property type="project" value="TAIR"/>
</dbReference>
<dbReference type="GO" id="GO:0048759">
    <property type="term" value="P:xylem vessel member cell differentiation"/>
    <property type="evidence" value="ECO:0000314"/>
    <property type="project" value="UniProtKB"/>
</dbReference>
<dbReference type="FunFam" id="2.170.150.80:FF:000002">
    <property type="entry name" value="Nac domain-containing protein 86"/>
    <property type="match status" value="1"/>
</dbReference>
<dbReference type="Gene3D" id="2.170.150.80">
    <property type="entry name" value="NAC domain"/>
    <property type="match status" value="1"/>
</dbReference>
<dbReference type="InterPro" id="IPR003441">
    <property type="entry name" value="NAC-dom"/>
</dbReference>
<dbReference type="InterPro" id="IPR036093">
    <property type="entry name" value="NAC_dom_sf"/>
</dbReference>
<dbReference type="PANTHER" id="PTHR31744:SF211">
    <property type="entry name" value="OS04G0691300 PROTEIN"/>
    <property type="match status" value="1"/>
</dbReference>
<dbReference type="PANTHER" id="PTHR31744">
    <property type="entry name" value="PROTEIN CUP-SHAPED COTYLEDON 2-RELATED"/>
    <property type="match status" value="1"/>
</dbReference>
<dbReference type="Pfam" id="PF02365">
    <property type="entry name" value="NAM"/>
    <property type="match status" value="1"/>
</dbReference>
<dbReference type="SUPFAM" id="SSF101941">
    <property type="entry name" value="NAC domain"/>
    <property type="match status" value="1"/>
</dbReference>
<dbReference type="PROSITE" id="PS51005">
    <property type="entry name" value="NAC"/>
    <property type="match status" value="1"/>
</dbReference>
<sequence length="324" mass="37427">MDNIMQSSMPPGFRFHPTEEELVGYYLDRKINSMKSALDVIVEIDLYKMEPWDIQARCKLGYEEQNEWYFFSHKDRKYPTGTRTNRATAAGFWKATGRDKAVLSKNSVIGMRKTLVYYKGRAPNGRKSDWIMHEYRLQNSELAPVQEEGWVVCRAFRKPIPNQRPLGYEPWQNQLYHVESSNNYSSSVTMNTSHHIGASSSSHNLNQMLMSNNHYNPNNTSSSMHQYGNIELPQLDSPSLSPSLGTNKDQNESFEQEEEKSFNCVDWRTLDTLLETQVIHPHNPNILMFETQSYNPAPSFPSMHQSYNEVEANIHHSLGCFPDS</sequence>
<accession>Q9C8W9</accession>
<evidence type="ECO:0000255" key="1">
    <source>
        <dbReference type="PROSITE-ProRule" id="PRU00353"/>
    </source>
</evidence>
<evidence type="ECO:0000256" key="2">
    <source>
        <dbReference type="SAM" id="MobiDB-lite"/>
    </source>
</evidence>
<evidence type="ECO:0000269" key="3">
    <source>
    </source>
</evidence>
<evidence type="ECO:0000269" key="4">
    <source>
    </source>
</evidence>
<evidence type="ECO:0000269" key="5">
    <source>
    </source>
</evidence>
<evidence type="ECO:0000269" key="6">
    <source>
    </source>
</evidence>
<evidence type="ECO:0000269" key="7">
    <source>
    </source>
</evidence>
<evidence type="ECO:0000269" key="8">
    <source>
    </source>
</evidence>
<evidence type="ECO:0000269" key="9">
    <source>
    </source>
</evidence>
<evidence type="ECO:0000269" key="10">
    <source>
    </source>
</evidence>
<evidence type="ECO:0000269" key="11">
    <source>
    </source>
</evidence>
<evidence type="ECO:0000269" key="12">
    <source>
    </source>
</evidence>
<evidence type="ECO:0000269" key="13">
    <source>
    </source>
</evidence>
<evidence type="ECO:0000269" key="14">
    <source>
    </source>
</evidence>
<evidence type="ECO:0000269" key="15">
    <source>
    </source>
</evidence>
<evidence type="ECO:0000269" key="16">
    <source>
    </source>
</evidence>
<evidence type="ECO:0000269" key="17">
    <source>
    </source>
</evidence>
<evidence type="ECO:0000269" key="18">
    <source>
    </source>
</evidence>
<evidence type="ECO:0000269" key="19">
    <source>
    </source>
</evidence>
<evidence type="ECO:0000303" key="20">
    <source>
    </source>
</evidence>
<evidence type="ECO:0000303" key="21">
    <source>
    </source>
</evidence>
<evidence type="ECO:0000305" key="22"/>
<evidence type="ECO:0000312" key="23">
    <source>
        <dbReference type="Araport" id="AT1G71930"/>
    </source>
</evidence>
<evidence type="ECO:0000312" key="24">
    <source>
        <dbReference type="EMBL" id="AAG52219.1"/>
    </source>
</evidence>
<evidence type="ECO:0000312" key="25">
    <source>
        <dbReference type="Proteomes" id="UP000006548"/>
    </source>
</evidence>
<feature type="chain" id="PRO_0000433120" description="NAC domain-containing protein 30">
    <location>
        <begin position="1"/>
        <end position="324"/>
    </location>
</feature>
<feature type="domain" description="NAC" evidence="1">
    <location>
        <begin position="9"/>
        <end position="158"/>
    </location>
</feature>
<feature type="DNA-binding region" evidence="1">
    <location>
        <begin position="109"/>
        <end position="164"/>
    </location>
</feature>
<feature type="region of interest" description="Disordered" evidence="2">
    <location>
        <begin position="232"/>
        <end position="259"/>
    </location>
</feature>
<feature type="compositionally biased region" description="Low complexity" evidence="2">
    <location>
        <begin position="232"/>
        <end position="244"/>
    </location>
</feature>
<name>NAC30_ARATH</name>
<reference key="1">
    <citation type="journal article" date="2000" name="Nature">
        <title>Sequence and analysis of chromosome 1 of the plant Arabidopsis thaliana.</title>
        <authorList>
            <person name="Theologis A."/>
            <person name="Ecker J.R."/>
            <person name="Palm C.J."/>
            <person name="Federspiel N.A."/>
            <person name="Kaul S."/>
            <person name="White O."/>
            <person name="Alonso J."/>
            <person name="Altafi H."/>
            <person name="Araujo R."/>
            <person name="Bowman C.L."/>
            <person name="Brooks S.Y."/>
            <person name="Buehler E."/>
            <person name="Chan A."/>
            <person name="Chao Q."/>
            <person name="Chen H."/>
            <person name="Cheuk R.F."/>
            <person name="Chin C.W."/>
            <person name="Chung M.K."/>
            <person name="Conn L."/>
            <person name="Conway A.B."/>
            <person name="Conway A.R."/>
            <person name="Creasy T.H."/>
            <person name="Dewar K."/>
            <person name="Dunn P."/>
            <person name="Etgu P."/>
            <person name="Feldblyum T.V."/>
            <person name="Feng J.-D."/>
            <person name="Fong B."/>
            <person name="Fujii C.Y."/>
            <person name="Gill J.E."/>
            <person name="Goldsmith A.D."/>
            <person name="Haas B."/>
            <person name="Hansen N.F."/>
            <person name="Hughes B."/>
            <person name="Huizar L."/>
            <person name="Hunter J.L."/>
            <person name="Jenkins J."/>
            <person name="Johnson-Hopson C."/>
            <person name="Khan S."/>
            <person name="Khaykin E."/>
            <person name="Kim C.J."/>
            <person name="Koo H.L."/>
            <person name="Kremenetskaia I."/>
            <person name="Kurtz D.B."/>
            <person name="Kwan A."/>
            <person name="Lam B."/>
            <person name="Langin-Hooper S."/>
            <person name="Lee A."/>
            <person name="Lee J.M."/>
            <person name="Lenz C.A."/>
            <person name="Li J.H."/>
            <person name="Li Y.-P."/>
            <person name="Lin X."/>
            <person name="Liu S.X."/>
            <person name="Liu Z.A."/>
            <person name="Luros J.S."/>
            <person name="Maiti R."/>
            <person name="Marziali A."/>
            <person name="Militscher J."/>
            <person name="Miranda M."/>
            <person name="Nguyen M."/>
            <person name="Nierman W.C."/>
            <person name="Osborne B.I."/>
            <person name="Pai G."/>
            <person name="Peterson J."/>
            <person name="Pham P.K."/>
            <person name="Rizzo M."/>
            <person name="Rooney T."/>
            <person name="Rowley D."/>
            <person name="Sakano H."/>
            <person name="Salzberg S.L."/>
            <person name="Schwartz J.R."/>
            <person name="Shinn P."/>
            <person name="Southwick A.M."/>
            <person name="Sun H."/>
            <person name="Tallon L.J."/>
            <person name="Tambunga G."/>
            <person name="Toriumi M.J."/>
            <person name="Town C.D."/>
            <person name="Utterback T."/>
            <person name="Van Aken S."/>
            <person name="Vaysberg M."/>
            <person name="Vysotskaia V.S."/>
            <person name="Walker M."/>
            <person name="Wu D."/>
            <person name="Yu G."/>
            <person name="Fraser C.M."/>
            <person name="Venter J.C."/>
            <person name="Davis R.W."/>
        </authorList>
    </citation>
    <scope>NUCLEOTIDE SEQUENCE [LARGE SCALE GENOMIC DNA]</scope>
    <source>
        <strain>cv. Columbia</strain>
    </source>
</reference>
<reference key="2">
    <citation type="journal article" date="2017" name="Plant J.">
        <title>Araport11: a complete reannotation of the Arabidopsis thaliana reference genome.</title>
        <authorList>
            <person name="Cheng C.Y."/>
            <person name="Krishnakumar V."/>
            <person name="Chan A.P."/>
            <person name="Thibaud-Nissen F."/>
            <person name="Schobel S."/>
            <person name="Town C.D."/>
        </authorList>
    </citation>
    <scope>GENOME REANNOTATION</scope>
    <source>
        <strain>cv. Columbia</strain>
    </source>
</reference>
<reference key="3">
    <citation type="submission" date="2006-08" db="EMBL/GenBank/DDBJ databases">
        <title>Arabidopsis ORF Clones.</title>
        <authorList>
            <person name="Quinitio C."/>
            <person name="Chen H."/>
            <person name="Kim C.J."/>
            <person name="Shinn P."/>
            <person name="Ecker J.R."/>
        </authorList>
    </citation>
    <scope>NUCLEOTIDE SEQUENCE [LARGE SCALE MRNA]</scope>
    <source>
        <strain>cv. Columbia</strain>
    </source>
</reference>
<reference key="4">
    <citation type="submission" date="2002-03" db="EMBL/GenBank/DDBJ databases">
        <title>Full-length cDNA from Arabidopsis thaliana.</title>
        <authorList>
            <person name="Brover V.V."/>
            <person name="Troukhan M.E."/>
            <person name="Alexandrov N.A."/>
            <person name="Lu Y.-P."/>
            <person name="Flavell R.B."/>
            <person name="Feldmann K.A."/>
        </authorList>
    </citation>
    <scope>NUCLEOTIDE SEQUENCE [LARGE SCALE MRNA]</scope>
</reference>
<reference key="5">
    <citation type="journal article" date="2003" name="DNA Res.">
        <title>Comprehensive analysis of NAC family genes in Oryza sativa and Arabidopsis thaliana.</title>
        <authorList>
            <person name="Ooka H."/>
            <person name="Satoh K."/>
            <person name="Doi K."/>
            <person name="Nagata T."/>
            <person name="Otomo Y."/>
            <person name="Murakami K."/>
            <person name="Matsubara K."/>
            <person name="Osato N."/>
            <person name="Kawai J."/>
            <person name="Carninci P."/>
            <person name="Hayashizaki Y."/>
            <person name="Suzuki K."/>
            <person name="Kojima K."/>
            <person name="Takahara Y."/>
            <person name="Yamamoto K."/>
            <person name="Kikuchi S."/>
        </authorList>
    </citation>
    <scope>GENE FAMILY</scope>
    <scope>NOMENCLATURE</scope>
</reference>
<reference key="6">
    <citation type="journal article" date="2005" name="Genes Dev.">
        <title>Transcription switches for protoxylem and metaxylem vessel formation.</title>
        <authorList>
            <person name="Kubo M."/>
            <person name="Udagawa M."/>
            <person name="Nishikubo N."/>
            <person name="Horiguchi G."/>
            <person name="Yamaguchi M."/>
            <person name="Ito J."/>
            <person name="Mimura T."/>
            <person name="Fukuda H."/>
            <person name="Demura T."/>
        </authorList>
    </citation>
    <scope>FUNCTION</scope>
    <scope>DISRUPTION PHENOTYPE</scope>
    <scope>TISSUE SPECIFICITY</scope>
    <scope>DEVELOPMENTAL STAGE</scope>
    <scope>SUBCELLULAR LOCATION</scope>
    <scope>INDUCTION BY BRASSINOSTEROIDS; AUXIN AND CYTOKININ</scope>
    <scope>GENE FAMILY</scope>
    <scope>NOMENCLATURE</scope>
    <source>
        <strain>cv. Columbia</strain>
    </source>
</reference>
<reference key="7">
    <citation type="journal article" date="2006" name="Proc. Natl. Acad. Sci. U.S.A.">
        <title>Transcriptional and posttranscriptional regulation of transcription factor expression in Arabidopsis roots.</title>
        <authorList>
            <person name="Lee J.-Y."/>
            <person name="Colinas J."/>
            <person name="Wang J.Y."/>
            <person name="Mace D."/>
            <person name="Ohler U."/>
            <person name="Benfey P.N."/>
        </authorList>
    </citation>
    <scope>TISSUE SPECIFICITY</scope>
</reference>
<reference key="8">
    <citation type="journal article" date="2007" name="Plant Cell">
        <title>The MYB46 transcription factor is a direct target of SND1 and regulates secondary wall biosynthesis in Arabidopsis.</title>
        <authorList>
            <person name="Zhong R."/>
            <person name="Richardson E.A."/>
            <person name="Ye Z.-H."/>
        </authorList>
    </citation>
    <scope>FUNCTION</scope>
</reference>
<reference key="9">
    <citation type="journal article" date="2007" name="Plant J.">
        <title>ANAC012, a member of the plant-specific NAC transcription factor family, negatively regulates xylary fiber development in Arabidopsis thaliana.</title>
        <authorList>
            <person name="Ko J.-H."/>
            <person name="Yang S.H."/>
            <person name="Park A.H."/>
            <person name="Lerouxel O."/>
            <person name="Han K.-H."/>
        </authorList>
    </citation>
    <scope>TISSUE SPECIFICITY</scope>
</reference>
<reference key="10">
    <citation type="journal article" date="2008" name="Plant Cell">
        <title>A battery of transcription factors involved in the regulation of secondary cell wall biosynthesis in Arabidopsis.</title>
        <authorList>
            <person name="Zhong R."/>
            <person name="Lee C."/>
            <person name="Zhou J."/>
            <person name="McCarthy R.L."/>
            <person name="Ye Z.H."/>
        </authorList>
    </citation>
    <scope>FUNCTION</scope>
    <scope>TISSUE SPECIFICITY</scope>
</reference>
<reference key="11">
    <citation type="journal article" date="2008" name="Plant Cell">
        <title>ASYMMETRIC LEAVES2-LIKE19/LATERAL ORGAN BOUNDARIES DOMAIN30 and ASL20/LBD18 regulate tracheary element differentiation in Arabidopsis.</title>
        <authorList>
            <person name="Soyano T."/>
            <person name="Thitamadee S."/>
            <person name="Machida Y."/>
            <person name="Chua N.-H."/>
        </authorList>
    </citation>
    <scope>INDUCTION BY ASL20</scope>
    <scope>FUNCTION</scope>
</reference>
<reference key="12">
    <citation type="journal article" date="2008" name="Plant J.">
        <title>Vascular-related NAC-DOMAIN7 is involved in the differentiation of all types of xylem vessels in Arabidopsis roots and shoots.</title>
        <authorList>
            <person name="Yamaguchi M."/>
            <person name="Kubo M."/>
            <person name="Fukuda H."/>
            <person name="Demura T."/>
        </authorList>
    </citation>
    <scope>FUNCTION</scope>
    <scope>DISRUPTION PHENOTYPE</scope>
    <scope>INTERACTION WITH NAC037/VND1; NAC076/VND2 AND NAC105/VND3</scope>
    <scope>HOMODIMER</scope>
    <scope>SUBCELLULAR LOCATION</scope>
    <scope>TISSUE SPECIFICITY</scope>
    <scope>DEVELOPMENTAL STAGE</scope>
    <scope>REGULATION BY PROTEASOME DEGRADATION</scope>
    <source>
        <strain>cv. Columbia</strain>
    </source>
</reference>
<reference key="13">
    <citation type="journal article" date="2009" name="Plant Cell">
        <title>MYB58 and MYB63 are transcriptional activators of the lignin biosynthetic pathway during secondary cell wall formation in Arabidopsis.</title>
        <authorList>
            <person name="Zhou J."/>
            <person name="Lee C."/>
            <person name="Zhong R."/>
            <person name="Ye Z.-H."/>
        </authorList>
    </citation>
    <scope>FUNCTION</scope>
    <source>
        <strain>cv. Columbia</strain>
    </source>
</reference>
<reference key="14">
    <citation type="journal article" date="2009" name="Plant Cell Physiol.">
        <title>MYB83 is a direct target of SND1 and acts redundantly with MYB46 in the regulation of secondary cell wall biosynthesis in Arabidopsis.</title>
        <authorList>
            <person name="McCarthy R.L."/>
            <person name="Zhong R."/>
            <person name="Ye Z.-H."/>
        </authorList>
    </citation>
    <scope>FUNCTION</scope>
</reference>
<reference key="15">
    <citation type="journal article" date="2010" name="Mol. Plant">
        <title>Global analysis of direct targets of secondary wall NAC master switches in Arabidopsis.</title>
        <authorList>
            <person name="Zhong R."/>
            <person name="Lee C."/>
            <person name="Ye Z.-H."/>
        </authorList>
    </citation>
    <scope>FUNCTION</scope>
</reference>
<reference key="16">
    <citation type="journal article" date="2010" name="Plant Cell">
        <title>VND-INTERACTING2, a NAC domain transcription factor, negatively regulates xylem vessel formation in Arabidopsis.</title>
        <authorList>
            <person name="Yamaguchi M."/>
            <person name="Ohtani M."/>
            <person name="Mitsuda N."/>
            <person name="Kubo M."/>
            <person name="Ohme-Takagi M."/>
            <person name="Fukuda H."/>
            <person name="Demura T."/>
        </authorList>
    </citation>
    <scope>INTERACTION WITH NAC083/VNI2</scope>
</reference>
<reference key="17">
    <citation type="journal article" date="2010" name="Plant Physiol.">
        <title>VASCULAR-RELATED NAC-DOMAIN6 and VASCULAR-RELATED NAC-DOMAIN7 effectively induce transdifferentiation into xylem vessel elements under control of an induction system.</title>
        <authorList>
            <person name="Yamaguchi M."/>
            <person name="Goue N."/>
            <person name="Igarashi H."/>
            <person name="Ohtani M."/>
            <person name="Nakano Y."/>
            <person name="Mortimer J.C."/>
            <person name="Nishikubo N."/>
            <person name="Kubo M."/>
            <person name="Katayama Y."/>
            <person name="Kakegawa K."/>
            <person name="Dupree P."/>
            <person name="Demura T."/>
        </authorList>
    </citation>
    <scope>FUNCTION</scope>
</reference>
<reference key="18">
    <citation type="journal article" date="2011" name="Nat. Methods">
        <title>Enhanced Y1H assays for Arabidopsis.</title>
        <authorList>
            <person name="Gaudinier A."/>
            <person name="Zhang L."/>
            <person name="Reece-Hoyes J.S."/>
            <person name="Taylor-Teeples M."/>
            <person name="Pu L."/>
            <person name="Liu Z."/>
            <person name="Breton G."/>
            <person name="Pruneda-Paz J.L."/>
            <person name="Kim D."/>
            <person name="Kay S.A."/>
            <person name="Walhout A.J.M."/>
            <person name="Ware D."/>
            <person name="Brady S.M."/>
        </authorList>
    </citation>
    <scope>FUNCTION</scope>
</reference>
<reference key="19">
    <citation type="journal article" date="2011" name="Plant Cell">
        <title>The Arabidopsis thaliana checkpoint kinase WEE1 protects against premature vascular differentiation during replication stress.</title>
        <authorList>
            <person name="Cools T."/>
            <person name="Iantcheva A."/>
            <person name="Weimer A.K."/>
            <person name="Boens S."/>
            <person name="Takahashi N."/>
            <person name="Maes S."/>
            <person name="Van den Daele H."/>
            <person name="Van Isterdael G."/>
            <person name="Schnittger A."/>
            <person name="De Veylder L."/>
        </authorList>
    </citation>
    <scope>FUNCTION</scope>
    <scope>REPRESSION BY WEE1</scope>
    <source>
        <strain>cv. Columbia</strain>
    </source>
</reference>
<reference key="20">
    <citation type="journal article" date="2011" name="Plant J.">
        <title>VASCULAR-RELATED NAC-DOMAIN7 directly regulates the expression of a broad range of genes for xylem vessel formation.</title>
        <authorList>
            <person name="Yamaguchi M."/>
            <person name="Mitsuda N."/>
            <person name="Ohtani M."/>
            <person name="Ohme-Takagi M."/>
            <person name="Kato K."/>
            <person name="Demura T."/>
        </authorList>
    </citation>
    <scope>FUNCTION</scope>
</reference>
<reference key="21">
    <citation type="journal article" date="2011" name="Plant Signal. Behav.">
        <title>Secondary wall NAC binding element (SNBE), a key cis-acting element required for target gene activation by secondary wall NAC master switches.</title>
        <authorList>
            <person name="McCarthy R.L."/>
            <person name="Zhong R."/>
            <person name="Ye Z.-H."/>
        </authorList>
    </citation>
    <scope>REVIEW</scope>
</reference>
<reference key="22">
    <citation type="journal article" date="2012" name="Plant Cell">
        <title>Verticillium infection triggers VASCULAR-RELATED NAC DOMAIN7-dependent de novo xylem formation and enhances drought tolerance in Arabidopsis.</title>
        <authorList>
            <person name="Reusche M."/>
            <person name="Thole K."/>
            <person name="Janz D."/>
            <person name="Truskina J."/>
            <person name="Rindfleisch S."/>
            <person name="Drubert C."/>
            <person name="Polle A."/>
            <person name="Lipka V."/>
            <person name="Teichmann T."/>
        </authorList>
    </citation>
    <scope>FUNCTION</scope>
    <scope>INDUCTION BY VERTICILLIUM LONGISPORUM</scope>
    <source>
        <strain>cv. Columbia</strain>
    </source>
</reference>
<reference key="23">
    <citation type="journal article" date="2012" name="Plant Cell Physiol.">
        <title>A chemical biology approach reveals an opposite action between thermospermine and auxin in xylem development in Arabidopsis thaliana.</title>
        <authorList>
            <person name="Yoshimoto K."/>
            <person name="Noutoshi Y."/>
            <person name="Hayashi K."/>
            <person name="Shirasu K."/>
            <person name="Takahashi T."/>
            <person name="Motose H."/>
        </authorList>
    </citation>
    <scope>INDUCTION BY AUXIN</scope>
</reference>
<comment type="function">
    <text evidence="3 6 7 8 9 10 11 13 14 15 16 17">Transcription activator that binds to the secondary wall NAC binding element (SNBE), 5'-(T/A)NN(C/T)(T/C/G)TNNNNNNNA(A/C)GN(A/C/T)(A/T)-3', in the promoter of target genes (e.g. genes involved in secondary wall biosynthesis, cell wall modification such as xylan accumulation, and programmed cell death) (PubMed:20488898, PubMed:20935069, PubMed:21284754, PubMed:22037706). Involved in xylem formation in roots and shoots, especially regulating protoxylem vessel differentiation by promoting immature xylem vessel-specific genes expression (PubMed:16103214, PubMed:18445131, PubMed:20488898, PubMed:21284754, PubMed:21498679). Can activate the expression of several genes including XCP1, MYB46, NAC010/SND3, MYB103, MYB58, MYB63, MYB83, KNAT7, ASL19 and ASL20 (PubMed:17890373, PubMed:18952777, PubMed:19088331, PubMed:19122102, PubMed:19808805, PubMed:20935069, PubMed:21284754).</text>
</comment>
<comment type="function">
    <text evidence="19">Required for the soilborne fungal pathogen Verticillium longisporum-induced transdifferentiation of chloroplast-containing bundle sheath cells to functional xylem elements leading to stunted growth, vein clearing, and leaf chloroses, as well as xylem hyperplasia within the vasculature of leaves, hypocotyls, and roots due to reinitiation of cambial activity and transdifferentiation of xylem parenchyma cells. This developmental reprogramming also mediates an increased drought stress tolerance.</text>
</comment>
<comment type="subunit">
    <text evidence="7 12">Forms homodimer and heterodimers with other VND proteins (e.g. NAC037/VND1, NAC076/VND2 and NAC105/VND3) via their N-termini (PubMed:18445131). Interacts with NAC083/VNI2 (PubMed:20388856).</text>
</comment>
<comment type="subcellular location">
    <subcellularLocation>
        <location evidence="1 3 7">Nucleus</location>
    </subcellularLocation>
</comment>
<comment type="tissue specificity">
    <text evidence="3 4 5 7 8">Expressed in developing protoxylems in roots and shoots (PubMed:16103214, PubMed:16581911, PubMed:17565617, PubMed:18952777). Detected in root protoxylem poles and in vessels of protoxylems, outermost metaxylems, inner metaxylems, shoots and hypocotyls. Expressed in roots, hypocotyls, cotyledons and leaves (PubMed:18445131). Accumulates in the xylem but not in interfascicular fibers or pith cells in inflorescence stems. Present in developing vessels of the secondary xylem in roots undergoing secondary growth (PubMed:18952777).</text>
</comment>
<comment type="developmental stage">
    <text evidence="3 7">Predominantly expressed in immature xylem vessels, only in some cells just beside xylem vessels. Also present in various vascular cells of older part of the roots, near the location of emergence of the lateral roots.</text>
</comment>
<comment type="induction">
    <text evidence="3 7 9 16 18 19">By brassinosteroids (e.g. brassinolide BL), auxin (e.g. 2,4-dichlorphenoxyacetic acid 2,4-D) and cytokinin (e.g. kinetin), with a synergistic effect (PubMed:16103214, PubMed:22345435). Up-regulated in a feed-back loop by ASL20 (PubMed:19088331). Levels are monitored by proteasome-mediated degradation (PubMed:18445131). Repressed by WEE1 upon replication stress to prevent premature tracheary element differentiation (PubMed:21498679). Accumulates during infection by the soilborne fungal pathogen Verticillium longisporum, especially in tissues undergoing de novo xylem formation (PubMed:23023171).</text>
</comment>
<comment type="domain">
    <text evidence="1">The NAC domain includes a DNA binding domain and a dimerization domain.</text>
</comment>
<comment type="disruption phenotype">
    <text evidence="3 7">Defects in protoxylem vessel formation in seedling roots.</text>
</comment>
<comment type="similarity">
    <text evidence="22">Belongs to the plant vascular related NAC-domain protein family.</text>
</comment>